<comment type="function">
    <text evidence="1">Usually encoded in the trnK tRNA gene intron. Probably assists in splicing its own and other chloroplast group II introns.</text>
</comment>
<comment type="subcellular location">
    <subcellularLocation>
        <location>Plastid</location>
        <location>Chloroplast</location>
    </subcellularLocation>
</comment>
<comment type="similarity">
    <text evidence="1">Belongs to the intron maturase 2 family. MatK subfamily.</text>
</comment>
<sequence length="503" mass="59708">MEEFKRYLELDRSQQHDFVYPLIFQEYIYALAHDHGLNRSIFLENTGYDNKSSLLIVKRLITQMYQRNHLIFCANDSNQNPFFGHNTNVYSQMLLEGFAVLVEIPFSLRLISSLKGKEIVKSHNLRSIHSIFPFLEDKFSHLNYVLDILIPHSIHLEVLVQTLRYWVKDVSSLHLLRFFLHEYRNWNSLITPKKSSFSFSKRNQRLFLFLYNSHVCEYESIFVFLRNQSSYLRSISSGTFLERIYFYGKIEHFVEVFTKDFKAILWLFKDPFMHYVRYQGKSLLASKGTSLLMNKWKYYLVNFWQCYFYMWSQPGRIHRNQLSNHSLDLLGYLSSVRLNPSIVRSQMLENSFLIGNAIKKFDTIVPIIPLIGSLSKAKFCNVLGHPISKPVWSDLSDSDIIDRFGRIYRNLSHYYSGSSKKMSLYRIKYILRLSXARTLARKHKSTVRAFLKRLGSELLEEFFTEEEQVFSLTFPKASFTSRGLYRRRIWYLDIIXINDLANH</sequence>
<gene>
    <name evidence="1" type="primary">matK</name>
</gene>
<accession>Q8MA20</accession>
<organism>
    <name type="scientific">Diospyros kaki</name>
    <name type="common">Kaki persimmon</name>
    <name type="synonym">Diospyros chinensis</name>
    <dbReference type="NCBI Taxonomy" id="35925"/>
    <lineage>
        <taxon>Eukaryota</taxon>
        <taxon>Viridiplantae</taxon>
        <taxon>Streptophyta</taxon>
        <taxon>Embryophyta</taxon>
        <taxon>Tracheophyta</taxon>
        <taxon>Spermatophyta</taxon>
        <taxon>Magnoliopsida</taxon>
        <taxon>eudicotyledons</taxon>
        <taxon>Gunneridae</taxon>
        <taxon>Pentapetalae</taxon>
        <taxon>asterids</taxon>
        <taxon>Ericales</taxon>
        <taxon>Ebenaceae</taxon>
        <taxon>Diospyros</taxon>
    </lineage>
</organism>
<dbReference type="EMBL" id="AJ430197">
    <property type="protein sequence ID" value="CAD22878.1"/>
    <property type="molecule type" value="Genomic_DNA"/>
</dbReference>
<dbReference type="GO" id="GO:0009507">
    <property type="term" value="C:chloroplast"/>
    <property type="evidence" value="ECO:0007669"/>
    <property type="project" value="UniProtKB-SubCell"/>
</dbReference>
<dbReference type="GO" id="GO:0003723">
    <property type="term" value="F:RNA binding"/>
    <property type="evidence" value="ECO:0007669"/>
    <property type="project" value="UniProtKB-KW"/>
</dbReference>
<dbReference type="GO" id="GO:0006397">
    <property type="term" value="P:mRNA processing"/>
    <property type="evidence" value="ECO:0007669"/>
    <property type="project" value="UniProtKB-KW"/>
</dbReference>
<dbReference type="GO" id="GO:0008380">
    <property type="term" value="P:RNA splicing"/>
    <property type="evidence" value="ECO:0007669"/>
    <property type="project" value="UniProtKB-UniRule"/>
</dbReference>
<dbReference type="GO" id="GO:0008033">
    <property type="term" value="P:tRNA processing"/>
    <property type="evidence" value="ECO:0007669"/>
    <property type="project" value="UniProtKB-KW"/>
</dbReference>
<dbReference type="HAMAP" id="MF_01390">
    <property type="entry name" value="MatK"/>
    <property type="match status" value="1"/>
</dbReference>
<dbReference type="InterPro" id="IPR024937">
    <property type="entry name" value="Domain_X"/>
</dbReference>
<dbReference type="InterPro" id="IPR002866">
    <property type="entry name" value="Maturase_MatK"/>
</dbReference>
<dbReference type="InterPro" id="IPR024942">
    <property type="entry name" value="Maturase_MatK_N"/>
</dbReference>
<dbReference type="PANTHER" id="PTHR34811">
    <property type="entry name" value="MATURASE K"/>
    <property type="match status" value="1"/>
</dbReference>
<dbReference type="PANTHER" id="PTHR34811:SF1">
    <property type="entry name" value="MATURASE K"/>
    <property type="match status" value="1"/>
</dbReference>
<dbReference type="Pfam" id="PF01348">
    <property type="entry name" value="Intron_maturas2"/>
    <property type="match status" value="1"/>
</dbReference>
<dbReference type="Pfam" id="PF01824">
    <property type="entry name" value="MatK_N"/>
    <property type="match status" value="1"/>
</dbReference>
<evidence type="ECO:0000255" key="1">
    <source>
        <dbReference type="HAMAP-Rule" id="MF_01390"/>
    </source>
</evidence>
<geneLocation type="chloroplast"/>
<reference key="1">
    <citation type="journal article" date="2002" name="Mol. Phylogenet. Evol.">
        <title>Phylogenetics of asterids based on 3 coding and 3 non-coding chloroplast DNA markers and the utility of non-coding DNA at higher taxonomic levels.</title>
        <authorList>
            <person name="Bremer B."/>
            <person name="Bremer K."/>
            <person name="Heidari N."/>
            <person name="Erixon P."/>
            <person name="Olmstead R.G."/>
            <person name="Anderberg A.A."/>
            <person name="Kallersjo M."/>
            <person name="Barkhordarian E."/>
        </authorList>
    </citation>
    <scope>NUCLEOTIDE SEQUENCE [GENOMIC DNA]</scope>
</reference>
<protein>
    <recommendedName>
        <fullName evidence="1">Maturase K</fullName>
    </recommendedName>
    <alternativeName>
        <fullName evidence="1">Intron maturase</fullName>
    </alternativeName>
</protein>
<keyword id="KW-0150">Chloroplast</keyword>
<keyword id="KW-0507">mRNA processing</keyword>
<keyword id="KW-0934">Plastid</keyword>
<keyword id="KW-0694">RNA-binding</keyword>
<keyword id="KW-0819">tRNA processing</keyword>
<proteinExistence type="inferred from homology"/>
<name>MATK_DIOKA</name>
<feature type="chain" id="PRO_0000143361" description="Maturase K">
    <location>
        <begin position="1"/>
        <end position="503"/>
    </location>
</feature>